<organism>
    <name type="scientific">Bordetella bronchiseptica (strain ATCC BAA-588 / NCTC 13252 / RB50)</name>
    <name type="common">Alcaligenes bronchisepticus</name>
    <dbReference type="NCBI Taxonomy" id="257310"/>
    <lineage>
        <taxon>Bacteria</taxon>
        <taxon>Pseudomonadati</taxon>
        <taxon>Pseudomonadota</taxon>
        <taxon>Betaproteobacteria</taxon>
        <taxon>Burkholderiales</taxon>
        <taxon>Alcaligenaceae</taxon>
        <taxon>Bordetella</taxon>
    </lineage>
</organism>
<proteinExistence type="inferred from homology"/>
<accession>Q7WH65</accession>
<sequence length="353" mass="38724">MSSKKKTKPVLPPGPVMVDVAGTTLTKDEKRRLRNPLVGGVILFARNFTDRRQLCALTRAIHKARKEPLLIAVDHEGGRVQRFRDDGFTALPPMQELGKLWDRDPLAAMRLATEAGYVLAAELRACGVDLSFTPVLDLDYGVSKVIGNRAFHHDARVVTMLSRALAQGLALAGMAACGKHFPGHGFVGADSHHEIPVDPRPLARILKDDAAPYAWLGDLVMPAVMPAHVIYPKVDAQPAGFSRRWVSEILRERLGYDGVVFSDDLTMEGASVAGDILARAEAALGAGCDMVLVCNRPDLADELLDRLQVQHPAASVERIRRLMPRFAAPDWDTLQNDSRYQHARRLQSQIVSG</sequence>
<keyword id="KW-0131">Cell cycle</keyword>
<keyword id="KW-0132">Cell division</keyword>
<keyword id="KW-0133">Cell shape</keyword>
<keyword id="KW-0961">Cell wall biogenesis/degradation</keyword>
<keyword id="KW-0963">Cytoplasm</keyword>
<keyword id="KW-0326">Glycosidase</keyword>
<keyword id="KW-0378">Hydrolase</keyword>
<keyword id="KW-0573">Peptidoglycan synthesis</keyword>
<feature type="chain" id="PRO_0000210781" description="Beta-hexosaminidase">
    <location>
        <begin position="1"/>
        <end position="353"/>
    </location>
</feature>
<feature type="active site" description="Proton donor/acceptor" evidence="1">
    <location>
        <position position="192"/>
    </location>
</feature>
<feature type="active site" description="Nucleophile" evidence="1">
    <location>
        <position position="263"/>
    </location>
</feature>
<feature type="binding site" evidence="1">
    <location>
        <position position="74"/>
    </location>
    <ligand>
        <name>substrate</name>
    </ligand>
</feature>
<feature type="binding site" evidence="1">
    <location>
        <position position="82"/>
    </location>
    <ligand>
        <name>substrate</name>
    </ligand>
</feature>
<feature type="binding site" evidence="1">
    <location>
        <position position="149"/>
    </location>
    <ligand>
        <name>substrate</name>
    </ligand>
</feature>
<feature type="binding site" evidence="1">
    <location>
        <begin position="179"/>
        <end position="180"/>
    </location>
    <ligand>
        <name>substrate</name>
    </ligand>
</feature>
<feature type="site" description="Important for catalytic activity" evidence="1">
    <location>
        <position position="190"/>
    </location>
</feature>
<reference key="1">
    <citation type="journal article" date="2003" name="Nat. Genet.">
        <title>Comparative analysis of the genome sequences of Bordetella pertussis, Bordetella parapertussis and Bordetella bronchiseptica.</title>
        <authorList>
            <person name="Parkhill J."/>
            <person name="Sebaihia M."/>
            <person name="Preston A."/>
            <person name="Murphy L.D."/>
            <person name="Thomson N.R."/>
            <person name="Harris D.E."/>
            <person name="Holden M.T.G."/>
            <person name="Churcher C.M."/>
            <person name="Bentley S.D."/>
            <person name="Mungall K.L."/>
            <person name="Cerdeno-Tarraga A.-M."/>
            <person name="Temple L."/>
            <person name="James K.D."/>
            <person name="Harris B."/>
            <person name="Quail M.A."/>
            <person name="Achtman M."/>
            <person name="Atkin R."/>
            <person name="Baker S."/>
            <person name="Basham D."/>
            <person name="Bason N."/>
            <person name="Cherevach I."/>
            <person name="Chillingworth T."/>
            <person name="Collins M."/>
            <person name="Cronin A."/>
            <person name="Davis P."/>
            <person name="Doggett J."/>
            <person name="Feltwell T."/>
            <person name="Goble A."/>
            <person name="Hamlin N."/>
            <person name="Hauser H."/>
            <person name="Holroyd S."/>
            <person name="Jagels K."/>
            <person name="Leather S."/>
            <person name="Moule S."/>
            <person name="Norberczak H."/>
            <person name="O'Neil S."/>
            <person name="Ormond D."/>
            <person name="Price C."/>
            <person name="Rabbinowitsch E."/>
            <person name="Rutter S."/>
            <person name="Sanders M."/>
            <person name="Saunders D."/>
            <person name="Seeger K."/>
            <person name="Sharp S."/>
            <person name="Simmonds M."/>
            <person name="Skelton J."/>
            <person name="Squares R."/>
            <person name="Squares S."/>
            <person name="Stevens K."/>
            <person name="Unwin L."/>
            <person name="Whitehead S."/>
            <person name="Barrell B.G."/>
            <person name="Maskell D.J."/>
        </authorList>
    </citation>
    <scope>NUCLEOTIDE SEQUENCE [LARGE SCALE GENOMIC DNA]</scope>
    <source>
        <strain>ATCC BAA-588 / NCTC 13252 / RB50</strain>
    </source>
</reference>
<protein>
    <recommendedName>
        <fullName evidence="1">Beta-hexosaminidase</fullName>
        <ecNumber evidence="1">3.2.1.52</ecNumber>
    </recommendedName>
    <alternativeName>
        <fullName evidence="1">Beta-N-acetylhexosaminidase</fullName>
    </alternativeName>
    <alternativeName>
        <fullName evidence="1">N-acetyl-beta-glucosaminidase</fullName>
    </alternativeName>
</protein>
<evidence type="ECO:0000255" key="1">
    <source>
        <dbReference type="HAMAP-Rule" id="MF_00364"/>
    </source>
</evidence>
<comment type="function">
    <text evidence="1">Plays a role in peptidoglycan recycling by cleaving the terminal beta-1,4-linked N-acetylglucosamine (GlcNAc) from peptide-linked peptidoglycan fragments, giving rise to free GlcNAc, anhydro-N-acetylmuramic acid and anhydro-N-acetylmuramic acid-linked peptides.</text>
</comment>
<comment type="catalytic activity">
    <reaction evidence="1">
        <text>Hydrolysis of terminal non-reducing N-acetyl-D-hexosamine residues in N-acetyl-beta-D-hexosaminides.</text>
        <dbReference type="EC" id="3.2.1.52"/>
    </reaction>
</comment>
<comment type="pathway">
    <text evidence="1">Cell wall biogenesis; peptidoglycan recycling.</text>
</comment>
<comment type="subcellular location">
    <subcellularLocation>
        <location evidence="1">Cytoplasm</location>
    </subcellularLocation>
</comment>
<comment type="similarity">
    <text evidence="1">Belongs to the glycosyl hydrolase 3 family. NagZ subfamily.</text>
</comment>
<dbReference type="EC" id="3.2.1.52" evidence="1"/>
<dbReference type="EMBL" id="BX640447">
    <property type="protein sequence ID" value="CAE33836.1"/>
    <property type="molecule type" value="Genomic_DNA"/>
</dbReference>
<dbReference type="RefSeq" id="WP_003810348.1">
    <property type="nucleotide sequence ID" value="NC_002927.3"/>
</dbReference>
<dbReference type="SMR" id="Q7WH65"/>
<dbReference type="CAZy" id="GH3">
    <property type="family name" value="Glycoside Hydrolase Family 3"/>
</dbReference>
<dbReference type="GeneID" id="93203528"/>
<dbReference type="KEGG" id="bbr:BB3344"/>
<dbReference type="eggNOG" id="COG1472">
    <property type="taxonomic scope" value="Bacteria"/>
</dbReference>
<dbReference type="HOGENOM" id="CLU_008392_0_0_4"/>
<dbReference type="UniPathway" id="UPA00544"/>
<dbReference type="Proteomes" id="UP000001027">
    <property type="component" value="Chromosome"/>
</dbReference>
<dbReference type="GO" id="GO:0005737">
    <property type="term" value="C:cytoplasm"/>
    <property type="evidence" value="ECO:0007669"/>
    <property type="project" value="UniProtKB-SubCell"/>
</dbReference>
<dbReference type="GO" id="GO:0004563">
    <property type="term" value="F:beta-N-acetylhexosaminidase activity"/>
    <property type="evidence" value="ECO:0007669"/>
    <property type="project" value="UniProtKB-UniRule"/>
</dbReference>
<dbReference type="GO" id="GO:0005975">
    <property type="term" value="P:carbohydrate metabolic process"/>
    <property type="evidence" value="ECO:0007669"/>
    <property type="project" value="InterPro"/>
</dbReference>
<dbReference type="GO" id="GO:0051301">
    <property type="term" value="P:cell division"/>
    <property type="evidence" value="ECO:0007669"/>
    <property type="project" value="UniProtKB-KW"/>
</dbReference>
<dbReference type="GO" id="GO:0071555">
    <property type="term" value="P:cell wall organization"/>
    <property type="evidence" value="ECO:0007669"/>
    <property type="project" value="UniProtKB-KW"/>
</dbReference>
<dbReference type="GO" id="GO:0009252">
    <property type="term" value="P:peptidoglycan biosynthetic process"/>
    <property type="evidence" value="ECO:0007669"/>
    <property type="project" value="UniProtKB-KW"/>
</dbReference>
<dbReference type="GO" id="GO:0009254">
    <property type="term" value="P:peptidoglycan turnover"/>
    <property type="evidence" value="ECO:0007669"/>
    <property type="project" value="UniProtKB-UniRule"/>
</dbReference>
<dbReference type="GO" id="GO:0008360">
    <property type="term" value="P:regulation of cell shape"/>
    <property type="evidence" value="ECO:0007669"/>
    <property type="project" value="UniProtKB-KW"/>
</dbReference>
<dbReference type="Gene3D" id="3.20.20.300">
    <property type="entry name" value="Glycoside hydrolase, family 3, N-terminal domain"/>
    <property type="match status" value="1"/>
</dbReference>
<dbReference type="HAMAP" id="MF_00364">
    <property type="entry name" value="NagZ"/>
    <property type="match status" value="1"/>
</dbReference>
<dbReference type="InterPro" id="IPR022956">
    <property type="entry name" value="Beta_hexosaminidase_bac"/>
</dbReference>
<dbReference type="InterPro" id="IPR019800">
    <property type="entry name" value="Glyco_hydro_3_AS"/>
</dbReference>
<dbReference type="InterPro" id="IPR001764">
    <property type="entry name" value="Glyco_hydro_3_N"/>
</dbReference>
<dbReference type="InterPro" id="IPR036962">
    <property type="entry name" value="Glyco_hydro_3_N_sf"/>
</dbReference>
<dbReference type="InterPro" id="IPR017853">
    <property type="entry name" value="Glycoside_hydrolase_SF"/>
</dbReference>
<dbReference type="InterPro" id="IPR050226">
    <property type="entry name" value="NagZ_Beta-hexosaminidase"/>
</dbReference>
<dbReference type="NCBIfam" id="NF003740">
    <property type="entry name" value="PRK05337.1"/>
    <property type="match status" value="1"/>
</dbReference>
<dbReference type="PANTHER" id="PTHR30480:SF13">
    <property type="entry name" value="BETA-HEXOSAMINIDASE"/>
    <property type="match status" value="1"/>
</dbReference>
<dbReference type="PANTHER" id="PTHR30480">
    <property type="entry name" value="BETA-HEXOSAMINIDASE-RELATED"/>
    <property type="match status" value="1"/>
</dbReference>
<dbReference type="Pfam" id="PF00933">
    <property type="entry name" value="Glyco_hydro_3"/>
    <property type="match status" value="1"/>
</dbReference>
<dbReference type="SUPFAM" id="SSF51445">
    <property type="entry name" value="(Trans)glycosidases"/>
    <property type="match status" value="1"/>
</dbReference>
<dbReference type="PROSITE" id="PS00775">
    <property type="entry name" value="GLYCOSYL_HYDROL_F3"/>
    <property type="match status" value="1"/>
</dbReference>
<name>NAGZ_BORBR</name>
<gene>
    <name evidence="1" type="primary">nagZ</name>
    <name type="ordered locus">BB3344</name>
</gene>